<reference key="1">
    <citation type="journal article" date="2012" name="MBio">
        <title>Comparative genome analysis of Trichophyton rubrum and related dermatophytes reveals candidate genes involved in infection.</title>
        <authorList>
            <person name="Martinez D.A."/>
            <person name="Oliver B.G."/>
            <person name="Graeser Y."/>
            <person name="Goldberg J.M."/>
            <person name="Li W."/>
            <person name="Martinez-Rossi N.M."/>
            <person name="Monod M."/>
            <person name="Shelest E."/>
            <person name="Barton R.C."/>
            <person name="Birch E."/>
            <person name="Brakhage A.A."/>
            <person name="Chen Z."/>
            <person name="Gurr S.J."/>
            <person name="Heiman D."/>
            <person name="Heitman J."/>
            <person name="Kosti I."/>
            <person name="Rossi A."/>
            <person name="Saif S."/>
            <person name="Samalova M."/>
            <person name="Saunders C.W."/>
            <person name="Shea T."/>
            <person name="Summerbell R.C."/>
            <person name="Xu J."/>
            <person name="Young S."/>
            <person name="Zeng Q."/>
            <person name="Birren B.W."/>
            <person name="Cuomo C.A."/>
            <person name="White T.C."/>
        </authorList>
    </citation>
    <scope>NUCLEOTIDE SEQUENCE [LARGE SCALE GENOMIC DNA]</scope>
    <source>
        <strain>ATCC MYA-4605 / CBS 113480</strain>
    </source>
</reference>
<dbReference type="EC" id="3.6.5.-" evidence="1"/>
<dbReference type="EMBL" id="DS995703">
    <property type="protein sequence ID" value="EEQ30943.1"/>
    <property type="molecule type" value="Genomic_DNA"/>
</dbReference>
<dbReference type="RefSeq" id="XP_002848256.1">
    <property type="nucleotide sequence ID" value="XM_002848210.1"/>
</dbReference>
<dbReference type="SMR" id="C5FJT2"/>
<dbReference type="STRING" id="554155.C5FJT2"/>
<dbReference type="GeneID" id="9229580"/>
<dbReference type="VEuPathDB" id="FungiDB:MCYG_03762"/>
<dbReference type="eggNOG" id="KOG2203">
    <property type="taxonomic scope" value="Eukaryota"/>
</dbReference>
<dbReference type="HOGENOM" id="CLU_011270_0_0_1"/>
<dbReference type="OMA" id="PIIKMTE"/>
<dbReference type="OrthoDB" id="1597724at2759"/>
<dbReference type="Proteomes" id="UP000002035">
    <property type="component" value="Unassembled WGS sequence"/>
</dbReference>
<dbReference type="GO" id="GO:0005789">
    <property type="term" value="C:endoplasmic reticulum membrane"/>
    <property type="evidence" value="ECO:0007669"/>
    <property type="project" value="UniProtKB-SubCell"/>
</dbReference>
<dbReference type="GO" id="GO:0005525">
    <property type="term" value="F:GTP binding"/>
    <property type="evidence" value="ECO:0007669"/>
    <property type="project" value="UniProtKB-UniRule"/>
</dbReference>
<dbReference type="GO" id="GO:0003924">
    <property type="term" value="F:GTPase activity"/>
    <property type="evidence" value="ECO:0007669"/>
    <property type="project" value="UniProtKB-UniRule"/>
</dbReference>
<dbReference type="GO" id="GO:0016320">
    <property type="term" value="P:endoplasmic reticulum membrane fusion"/>
    <property type="evidence" value="ECO:0007669"/>
    <property type="project" value="TreeGrafter"/>
</dbReference>
<dbReference type="CDD" id="cd01851">
    <property type="entry name" value="GBP"/>
    <property type="match status" value="1"/>
</dbReference>
<dbReference type="FunFam" id="3.40.50.300:FF:000727">
    <property type="entry name" value="Protein SEY1 homolog"/>
    <property type="match status" value="1"/>
</dbReference>
<dbReference type="Gene3D" id="3.40.50.300">
    <property type="entry name" value="P-loop containing nucleotide triphosphate hydrolases"/>
    <property type="match status" value="1"/>
</dbReference>
<dbReference type="HAMAP" id="MF_03109">
    <property type="entry name" value="Sey1"/>
    <property type="match status" value="1"/>
</dbReference>
<dbReference type="InterPro" id="IPR030386">
    <property type="entry name" value="G_GB1_RHD3_dom"/>
</dbReference>
<dbReference type="InterPro" id="IPR027417">
    <property type="entry name" value="P-loop_NTPase"/>
</dbReference>
<dbReference type="InterPro" id="IPR008803">
    <property type="entry name" value="RHD3/Sey1"/>
</dbReference>
<dbReference type="InterPro" id="IPR046758">
    <property type="entry name" value="Sey1/RHD3-like_3HB"/>
</dbReference>
<dbReference type="PANTHER" id="PTHR45923">
    <property type="entry name" value="PROTEIN SEY1"/>
    <property type="match status" value="1"/>
</dbReference>
<dbReference type="PANTHER" id="PTHR45923:SF2">
    <property type="entry name" value="PROTEIN SEY1"/>
    <property type="match status" value="1"/>
</dbReference>
<dbReference type="Pfam" id="PF05879">
    <property type="entry name" value="RHD3_GTPase"/>
    <property type="match status" value="1"/>
</dbReference>
<dbReference type="Pfam" id="PF20428">
    <property type="entry name" value="Sey1_3HB"/>
    <property type="match status" value="1"/>
</dbReference>
<dbReference type="SUPFAM" id="SSF52540">
    <property type="entry name" value="P-loop containing nucleoside triphosphate hydrolases"/>
    <property type="match status" value="1"/>
</dbReference>
<dbReference type="PROSITE" id="PS51715">
    <property type="entry name" value="G_GB1_RHD3"/>
    <property type="match status" value="1"/>
</dbReference>
<accession>C5FJT2</accession>
<evidence type="ECO:0000255" key="1">
    <source>
        <dbReference type="HAMAP-Rule" id="MF_03109"/>
    </source>
</evidence>
<evidence type="ECO:0000255" key="2">
    <source>
        <dbReference type="PROSITE-ProRule" id="PRU01052"/>
    </source>
</evidence>
<evidence type="ECO:0000256" key="3">
    <source>
        <dbReference type="SAM" id="MobiDB-lite"/>
    </source>
</evidence>
<feature type="chain" id="PRO_0000384987" description="Protein SEY1">
    <location>
        <begin position="1"/>
        <end position="862"/>
    </location>
</feature>
<feature type="topological domain" description="Cytoplasmic" evidence="1">
    <location>
        <begin position="1"/>
        <end position="743"/>
    </location>
</feature>
<feature type="transmembrane region" description="Helical" evidence="1">
    <location>
        <begin position="744"/>
        <end position="764"/>
    </location>
</feature>
<feature type="topological domain" description="Lumenal" evidence="1">
    <location>
        <begin position="765"/>
        <end position="767"/>
    </location>
</feature>
<feature type="transmembrane region" description="Helical" evidence="1">
    <location>
        <begin position="768"/>
        <end position="788"/>
    </location>
</feature>
<feature type="topological domain" description="Cytoplasmic" evidence="1">
    <location>
        <begin position="789"/>
        <end position="862"/>
    </location>
</feature>
<feature type="domain" description="GB1/RHD3-type G" evidence="2">
    <location>
        <begin position="48"/>
        <end position="301"/>
    </location>
</feature>
<feature type="region of interest" description="Disordered" evidence="3">
    <location>
        <begin position="818"/>
        <end position="862"/>
    </location>
</feature>
<feature type="coiled-coil region" evidence="1">
    <location>
        <begin position="476"/>
        <end position="500"/>
    </location>
</feature>
<feature type="binding site" evidence="1">
    <location>
        <begin position="58"/>
        <end position="65"/>
    </location>
    <ligand>
        <name>GTP</name>
        <dbReference type="ChEBI" id="CHEBI:37565"/>
    </ligand>
</feature>
<name>SEY1_ARTOC</name>
<proteinExistence type="inferred from homology"/>
<organism>
    <name type="scientific">Arthroderma otae (strain ATCC MYA-4605 / CBS 113480)</name>
    <name type="common">Microsporum canis</name>
    <dbReference type="NCBI Taxonomy" id="554155"/>
    <lineage>
        <taxon>Eukaryota</taxon>
        <taxon>Fungi</taxon>
        <taxon>Dikarya</taxon>
        <taxon>Ascomycota</taxon>
        <taxon>Pezizomycotina</taxon>
        <taxon>Eurotiomycetes</taxon>
        <taxon>Eurotiomycetidae</taxon>
        <taxon>Onygenales</taxon>
        <taxon>Arthrodermataceae</taxon>
        <taxon>Microsporum</taxon>
    </lineage>
</organism>
<gene>
    <name evidence="1" type="primary">SEY1</name>
    <name type="ORF">MCYG_03762</name>
</gene>
<keyword id="KW-0175">Coiled coil</keyword>
<keyword id="KW-0256">Endoplasmic reticulum</keyword>
<keyword id="KW-0342">GTP-binding</keyword>
<keyword id="KW-0378">Hydrolase</keyword>
<keyword id="KW-0472">Membrane</keyword>
<keyword id="KW-0547">Nucleotide-binding</keyword>
<keyword id="KW-1185">Reference proteome</keyword>
<keyword id="KW-0812">Transmembrane</keyword>
<keyword id="KW-1133">Transmembrane helix</keyword>
<comment type="function">
    <text evidence="1">Cooperates with the reticulon proteins and tubule-shaping DP1 family proteins to generate and maintain the structure of the tubular endoplasmic reticulum network. Has GTPase activity, which is required for its function in ER organization.</text>
</comment>
<comment type="subcellular location">
    <subcellularLocation>
        <location evidence="1">Endoplasmic reticulum membrane</location>
        <topology evidence="1">Multi-pass membrane protein</topology>
    </subcellularLocation>
    <text evidence="1">Enriched in the cortical ER. Concentrated in punctae along the ER tubules.</text>
</comment>
<comment type="similarity">
    <text evidence="2">Belongs to the TRAFAC class dynamin-like GTPase superfamily. GB1/RHD3 GTPase family. RHD3 subfamily.</text>
</comment>
<protein>
    <recommendedName>
        <fullName evidence="1">Protein SEY1</fullName>
        <ecNumber evidence="1">3.6.5.-</ecNumber>
    </recommendedName>
</protein>
<sequence>MASNGHFSSVGDVDGGNYQHGVQVVDGDKEFNPNLSKYLAHENVTPAGFNYHLISVFGSQSTGKSTLLNTLFKTDFSVMSETERRQTTKGIWLSKNKRTASNEKEKMADNVLVMDVEGTDGRERGEDQDFERKSALFALATSEVLIVNIWEHQVGLYQGANMGLLKTVFEVNLQLFLKDTKSTPRSLLFFVIRDFVGTTPLENLRNTLMQDLQRIWMSLSKPEGTENSTIEDYFDFEFAGLPHKSFQPEKFASEVDKLSTRFRDGHRDPSSTSAKGTAVEGGVFLPEYHRRIPADGFAVYAEGIWDQIVNNKDLDLPTQQELLAQFRCDEIAREVLILFDETIGPFEVQQAEGVRSGIPLILGSLGVAMRAARGKTMTSFETEASRYHKRVFMTKKSELEEKIDTRLKALFSGQLSAAHKSGVTQFSEAVSAAVKAGQKKGASYDFAEIVTRERKLAIEKFENEASTTMVEGAPWSDYKQELSLFQKDLEKISSQLRKDEMRRLATRVERWVRSRLGDSIDLEFNALGSGRGGSRAPENGDKPSEKTIWDRIWSLFVNTVLDAERRFTERARSFDASLEEVDVGLWRLRRKSWGVLRSKIEEEMMEGNILHKLRENFEDKFRYDDVGVPRIWRPTDDIEGIYTTARESTLSLIPLLARFRLNETSAPPPLDKWVGHMPSSASAADEEDLAPIGGVDEDDGKSLEEEMTMLSEAKRQDLTVRFKKAADGVYVEAKRSAIGGITQVPLYFYGLLLALGWNEIIAVLRNPIYFIFLLLIGVGAYVTFRLNLWGPMINMAEAASRQAVEEGKRRLREFLESSDSGRQAMAMSGRNARGTEEYEMSSNLKSKGRRTDTSDDDNDDDL</sequence>